<name>PA2HA_BOTNI</name>
<sequence>SPENCQGESQPCGCYCDAEGQGWPQDAEENGDIVCGEXTPC</sequence>
<dbReference type="GO" id="GO:0005576">
    <property type="term" value="C:extracellular region"/>
    <property type="evidence" value="ECO:0007669"/>
    <property type="project" value="UniProtKB-SubCell"/>
</dbReference>
<organism>
    <name type="scientific">Bothriechis nigroviridis</name>
    <name type="common">Black-speckled palm pit viper</name>
    <dbReference type="NCBI Taxonomy" id="88079"/>
    <lineage>
        <taxon>Eukaryota</taxon>
        <taxon>Metazoa</taxon>
        <taxon>Chordata</taxon>
        <taxon>Craniata</taxon>
        <taxon>Vertebrata</taxon>
        <taxon>Euteleostomi</taxon>
        <taxon>Lepidosauria</taxon>
        <taxon>Squamata</taxon>
        <taxon>Bifurcata</taxon>
        <taxon>Unidentata</taxon>
        <taxon>Episquamata</taxon>
        <taxon>Toxicofera</taxon>
        <taxon>Serpentes</taxon>
        <taxon>Colubroidea</taxon>
        <taxon>Viperidae</taxon>
        <taxon>Crotalinae</taxon>
        <taxon>Bothriechis</taxon>
    </lineage>
</organism>
<proteinExistence type="evidence at protein level"/>
<protein>
    <recommendedName>
        <fullName evidence="6">Phospholipase A2 homolog nigroviriditoxin acidic subunit A</fullName>
    </recommendedName>
</protein>
<comment type="function">
    <text evidence="2">Heterodimer A-B: Nigroviriditoxin possesses phospholipase A2 (PLA2) activity. It consists of a non-covalent association of a basic PLA2 subunit B with a non-enzymatic subunit A.</text>
</comment>
<comment type="function">
    <text evidence="1 2">Subunit A: The acidic subunit of nigroviriditoxin probably is a heterotrimer of three disulfide-linked chains generated by post-translational maturation of a PLA2-like precursor (PubMed:20590130). It appears to have no PLA2 activity of its own, instead inhibiting the catalytic activity of subunit B (PubMed:25434534). It is not toxic to mice by itself but increases toxicity of subunit B (PubMed:25434534).</text>
</comment>
<comment type="subunit">
    <text evidence="2">Nigroviriditoxin is a heterodimer of an acidic subunit A and a basic subunit B.</text>
</comment>
<comment type="subcellular location">
    <subcellularLocation>
        <location evidence="1 2">Secreted</location>
    </subcellularLocation>
</comment>
<comment type="tissue specificity">
    <text evidence="7">Expressed by the venom gland.</text>
</comment>
<comment type="similarity">
    <text evidence="5">Belongs to the phospholipase A2 family. Group II subfamily. D49 sub-subfamily.</text>
</comment>
<comment type="caution">
    <text evidence="5">The order of the peptides is unknown.</text>
</comment>
<reference evidence="5" key="1">
    <citation type="journal article" date="2010" name="J. Proteome Res.">
        <title>Snake venomics of Bothriechis nigroviridis reveals extreme variability among palm pitviper venoms: different evolutionary solutions for the same trophic purpose.</title>
        <authorList>
            <person name="Fernandez J."/>
            <person name="Lomonte B."/>
            <person name="Sanz L."/>
            <person name="Angulo Y."/>
            <person name="Gutierrez J.M."/>
            <person name="Calvete J.J."/>
        </authorList>
    </citation>
    <scope>PROTEIN SEQUENCE</scope>
    <scope>FUNCTION</scope>
    <scope>SUBCELLULAR LOCATION</scope>
    <source>
        <tissue evidence="3">Venom</tissue>
    </source>
</reference>
<reference evidence="5" key="2">
    <citation type="journal article" date="2015" name="Toxicon">
        <title>First crotoxin-like phospholipase A(2) complex from a New World non-rattlesnake species: nigroviriditoxin, from the arboreal Neotropical snake Bothriechis nigroviridis.</title>
        <authorList>
            <person name="Lomonte B."/>
            <person name="Mora-Obando D."/>
            <person name="Fernandez J."/>
            <person name="Sanz L."/>
            <person name="Pla D."/>
            <person name="Gutierrez J.M."/>
            <person name="Calvete J.J."/>
        </authorList>
    </citation>
    <scope>FUNCTION</scope>
    <scope>SUBUNIT</scope>
    <scope>SUBCELLULAR LOCATION</scope>
    <source>
        <tissue evidence="4">Venom</tissue>
    </source>
</reference>
<keyword id="KW-0903">Direct protein sequencing</keyword>
<keyword id="KW-0964">Secreted</keyword>
<accession>C0HJW8</accession>
<evidence type="ECO:0000269" key="1">
    <source>
    </source>
</evidence>
<evidence type="ECO:0000269" key="2">
    <source>
    </source>
</evidence>
<evidence type="ECO:0000303" key="3">
    <source>
    </source>
</evidence>
<evidence type="ECO:0000303" key="4">
    <source>
    </source>
</evidence>
<evidence type="ECO:0000305" key="5"/>
<evidence type="ECO:0000305" key="6">
    <source>
    </source>
</evidence>
<evidence type="ECO:0000305" key="7">
    <source>
    </source>
</evidence>
<feature type="chain" id="PRO_0000434986" description="Phospholipase A2 homolog nigroviriditoxin acidic subunit A">
    <location>
        <begin position="1"/>
        <end position="41"/>
    </location>
</feature>
<feature type="non-consecutive residues" evidence="3">
    <location>
        <begin position="12"/>
        <end position="13"/>
    </location>
</feature>
<feature type="non-consecutive residues" evidence="3">
    <location>
        <begin position="27"/>
        <end position="28"/>
    </location>
</feature>
<feature type="non-terminal residue" evidence="3">
    <location>
        <position position="41"/>
    </location>
</feature>